<comment type="function">
    <text evidence="2">Benzoate--CoA ligase involved in benzoyloxyglucosinolate biosynthesis in seeds. Glucosinolates are secondary metabolites involved in pathogen and insect defense of cruciferous plants.</text>
</comment>
<comment type="catalytic activity">
    <reaction evidence="2">
        <text>benzoate + ATP + CoA = benzoyl-CoA + AMP + diphosphate</text>
        <dbReference type="Rhea" id="RHEA:10132"/>
        <dbReference type="ChEBI" id="CHEBI:16150"/>
        <dbReference type="ChEBI" id="CHEBI:30616"/>
        <dbReference type="ChEBI" id="CHEBI:33019"/>
        <dbReference type="ChEBI" id="CHEBI:57287"/>
        <dbReference type="ChEBI" id="CHEBI:57369"/>
        <dbReference type="ChEBI" id="CHEBI:456215"/>
        <dbReference type="EC" id="6.2.1.25"/>
    </reaction>
</comment>
<comment type="subcellular location">
    <subcellularLocation>
        <location evidence="3">Peroxisome</location>
    </subcellularLocation>
</comment>
<comment type="similarity">
    <text evidence="3">Belongs to the ATP-dependent AMP-binding enzyme family.</text>
</comment>
<protein>
    <recommendedName>
        <fullName>Benzoate--CoA ligase, peroxisomal</fullName>
        <ecNumber>6.2.1.25</ecNumber>
    </recommendedName>
    <alternativeName>
        <fullName>Acyl-activating enzyme 20</fullName>
    </alternativeName>
    <alternativeName>
        <fullName>Protein BENZOYLOXYGLUCOSINOLATE 1</fullName>
    </alternativeName>
</protein>
<gene>
    <name type="primary">AAE20</name>
    <name type="synonym">BZO1</name>
    <name type="ordered locus">At1g65880</name>
    <name type="ORF">F12P19.5</name>
</gene>
<accession>Q9SS01</accession>
<keyword id="KW-0436">Ligase</keyword>
<keyword id="KW-0576">Peroxisome</keyword>
<keyword id="KW-0611">Plant defense</keyword>
<keyword id="KW-1185">Reference proteome</keyword>
<organism>
    <name type="scientific">Arabidopsis thaliana</name>
    <name type="common">Mouse-ear cress</name>
    <dbReference type="NCBI Taxonomy" id="3702"/>
    <lineage>
        <taxon>Eukaryota</taxon>
        <taxon>Viridiplantae</taxon>
        <taxon>Streptophyta</taxon>
        <taxon>Embryophyta</taxon>
        <taxon>Tracheophyta</taxon>
        <taxon>Spermatophyta</taxon>
        <taxon>Magnoliopsida</taxon>
        <taxon>eudicotyledons</taxon>
        <taxon>Gunneridae</taxon>
        <taxon>Pentapetalae</taxon>
        <taxon>rosids</taxon>
        <taxon>malvids</taxon>
        <taxon>Brassicales</taxon>
        <taxon>Brassicaceae</taxon>
        <taxon>Camelineae</taxon>
        <taxon>Arabidopsis</taxon>
    </lineage>
</organism>
<name>AAE20_ARATH</name>
<sequence length="580" mass="64941">MDDLALCEANNVPLTPMTFLKRASECYPNRTSIIYGKTRFTWPQTYDRCCRLAASLISLNISKNDVVSVMAPNTPALYEMHFAVPMAGAVLNPINTRLDATSIAAILRHAKPKILFLDRSFEALARESLHLLSSEDSNLNLPVIFIHENDFPKRASFEELDYECLIQRGEPTPSMVARMFRIQDEHDPISLNYTSGTTADPKGVVISHRGAYLCTLSAIIGWEMGTCPVYLWTLPMFHCNGWTFTWGTAARGGTSVCMRHVTAPEIYKNIEMHNVTHMCCVPTVFNILLKGNSLDLSPRSGPVHVLTGGSPPPAALVKKVQRLGFQVMHAYGQTEATGPILFCEWQDEWNRLPENQQMELKARQGISILGLADVDVKNKETQKSAPRDGKTMGEILIKGSSIMKGYLKNPKATFEAFKHGWLNTGDVGVIHPDGHVEIKDRSKDIIISGGENISSVEVENVLYKYPKVLETAVVAMPHPTWGETPCAFVVLEKSETTIKEDRVDKFQTRERNLIEYCRENLPHFMCPRKVVFLEELPKNGNGKILKPKLRDIAKGLVVEDEINVIAKEVKRPVGHFISRL</sequence>
<dbReference type="EC" id="6.2.1.25"/>
<dbReference type="EMBL" id="AC009513">
    <property type="protein sequence ID" value="AAF06049.1"/>
    <property type="molecule type" value="Genomic_DNA"/>
</dbReference>
<dbReference type="EMBL" id="CP002684">
    <property type="protein sequence ID" value="AEE34436.1"/>
    <property type="molecule type" value="Genomic_DNA"/>
</dbReference>
<dbReference type="PIR" id="A96683">
    <property type="entry name" value="A96683"/>
</dbReference>
<dbReference type="RefSeq" id="NP_176763.1">
    <property type="nucleotide sequence ID" value="NM_105260.3"/>
</dbReference>
<dbReference type="SMR" id="Q9SS01"/>
<dbReference type="FunCoup" id="Q9SS01">
    <property type="interactions" value="138"/>
</dbReference>
<dbReference type="STRING" id="3702.Q9SS01"/>
<dbReference type="GlyGen" id="Q9SS01">
    <property type="glycosylation" value="2 sites"/>
</dbReference>
<dbReference type="iPTMnet" id="Q9SS01"/>
<dbReference type="PaxDb" id="3702-AT1G65880.1"/>
<dbReference type="ProteomicsDB" id="244624"/>
<dbReference type="EnsemblPlants" id="AT1G65880.1">
    <property type="protein sequence ID" value="AT1G65880.1"/>
    <property type="gene ID" value="AT1G65880"/>
</dbReference>
<dbReference type="GeneID" id="842900"/>
<dbReference type="Gramene" id="AT1G65880.1">
    <property type="protein sequence ID" value="AT1G65880.1"/>
    <property type="gene ID" value="AT1G65880"/>
</dbReference>
<dbReference type="KEGG" id="ath:AT1G65880"/>
<dbReference type="Araport" id="AT1G65880"/>
<dbReference type="TAIR" id="AT1G65880">
    <property type="gene designation" value="BZO1"/>
</dbReference>
<dbReference type="eggNOG" id="KOG1176">
    <property type="taxonomic scope" value="Eukaryota"/>
</dbReference>
<dbReference type="HOGENOM" id="CLU_000022_59_5_1"/>
<dbReference type="InParanoid" id="Q9SS01"/>
<dbReference type="OMA" id="IRLMYTS"/>
<dbReference type="PhylomeDB" id="Q9SS01"/>
<dbReference type="BioCyc" id="ARA:AT1G65880-MONOMER"/>
<dbReference type="BioCyc" id="MetaCyc:AT1G65880-MONOMER"/>
<dbReference type="PRO" id="PR:Q9SS01"/>
<dbReference type="Proteomes" id="UP000006548">
    <property type="component" value="Chromosome 1"/>
</dbReference>
<dbReference type="ExpressionAtlas" id="Q9SS01">
    <property type="expression patterns" value="baseline and differential"/>
</dbReference>
<dbReference type="GO" id="GO:0005777">
    <property type="term" value="C:peroxisome"/>
    <property type="evidence" value="ECO:0000314"/>
    <property type="project" value="TAIR"/>
</dbReference>
<dbReference type="GO" id="GO:0018858">
    <property type="term" value="F:benzoate-CoA ligase activity"/>
    <property type="evidence" value="ECO:0000314"/>
    <property type="project" value="TAIR"/>
</dbReference>
<dbReference type="GO" id="GO:0006952">
    <property type="term" value="P:defense response"/>
    <property type="evidence" value="ECO:0007669"/>
    <property type="project" value="UniProtKB-KW"/>
</dbReference>
<dbReference type="GO" id="GO:0019761">
    <property type="term" value="P:glucosinolate biosynthetic process"/>
    <property type="evidence" value="ECO:0000315"/>
    <property type="project" value="TAIR"/>
</dbReference>
<dbReference type="CDD" id="cd12118">
    <property type="entry name" value="ttLC_FACS_AEE21_like"/>
    <property type="match status" value="1"/>
</dbReference>
<dbReference type="FunFam" id="3.30.300.30:FF:000008">
    <property type="entry name" value="2,3-dihydroxybenzoate-AMP ligase"/>
    <property type="match status" value="1"/>
</dbReference>
<dbReference type="FunFam" id="3.40.50.12780:FF:000003">
    <property type="entry name" value="Long-chain-fatty-acid--CoA ligase FadD"/>
    <property type="match status" value="1"/>
</dbReference>
<dbReference type="Gene3D" id="3.30.300.30">
    <property type="match status" value="1"/>
</dbReference>
<dbReference type="Gene3D" id="3.40.50.12780">
    <property type="entry name" value="N-terminal domain of ligase-like"/>
    <property type="match status" value="1"/>
</dbReference>
<dbReference type="InterPro" id="IPR025110">
    <property type="entry name" value="AMP-bd_C"/>
</dbReference>
<dbReference type="InterPro" id="IPR045851">
    <property type="entry name" value="AMP-bd_C_sf"/>
</dbReference>
<dbReference type="InterPro" id="IPR000873">
    <property type="entry name" value="AMP-dep_synth/lig_dom"/>
</dbReference>
<dbReference type="InterPro" id="IPR042099">
    <property type="entry name" value="ANL_N_sf"/>
</dbReference>
<dbReference type="NCBIfam" id="NF006020">
    <property type="entry name" value="PRK08162.1"/>
    <property type="match status" value="1"/>
</dbReference>
<dbReference type="PANTHER" id="PTHR43859">
    <property type="entry name" value="ACYL-ACTIVATING ENZYME"/>
    <property type="match status" value="1"/>
</dbReference>
<dbReference type="PANTHER" id="PTHR43859:SF25">
    <property type="entry name" value="BENZOATE--COA LIGASE, PEROXISOMAL-RELATED"/>
    <property type="match status" value="1"/>
</dbReference>
<dbReference type="Pfam" id="PF00501">
    <property type="entry name" value="AMP-binding"/>
    <property type="match status" value="1"/>
</dbReference>
<dbReference type="Pfam" id="PF13193">
    <property type="entry name" value="AMP-binding_C"/>
    <property type="match status" value="1"/>
</dbReference>
<dbReference type="SUPFAM" id="SSF56801">
    <property type="entry name" value="Acetyl-CoA synthetase-like"/>
    <property type="match status" value="1"/>
</dbReference>
<feature type="chain" id="PRO_0000415730" description="Benzoate--CoA ligase, peroxisomal">
    <location>
        <begin position="1"/>
        <end position="580"/>
    </location>
</feature>
<feature type="short sequence motif" description="Microbody targeting signal" evidence="1">
    <location>
        <begin position="578"/>
        <end position="580"/>
    </location>
</feature>
<evidence type="ECO:0000255" key="1"/>
<evidence type="ECO:0000269" key="2">
    <source>
    </source>
</evidence>
<evidence type="ECO:0000305" key="3"/>
<proteinExistence type="evidence at protein level"/>
<reference key="1">
    <citation type="journal article" date="2000" name="Nature">
        <title>Sequence and analysis of chromosome 1 of the plant Arabidopsis thaliana.</title>
        <authorList>
            <person name="Theologis A."/>
            <person name="Ecker J.R."/>
            <person name="Palm C.J."/>
            <person name="Federspiel N.A."/>
            <person name="Kaul S."/>
            <person name="White O."/>
            <person name="Alonso J."/>
            <person name="Altafi H."/>
            <person name="Araujo R."/>
            <person name="Bowman C.L."/>
            <person name="Brooks S.Y."/>
            <person name="Buehler E."/>
            <person name="Chan A."/>
            <person name="Chao Q."/>
            <person name="Chen H."/>
            <person name="Cheuk R.F."/>
            <person name="Chin C.W."/>
            <person name="Chung M.K."/>
            <person name="Conn L."/>
            <person name="Conway A.B."/>
            <person name="Conway A.R."/>
            <person name="Creasy T.H."/>
            <person name="Dewar K."/>
            <person name="Dunn P."/>
            <person name="Etgu P."/>
            <person name="Feldblyum T.V."/>
            <person name="Feng J.-D."/>
            <person name="Fong B."/>
            <person name="Fujii C.Y."/>
            <person name="Gill J.E."/>
            <person name="Goldsmith A.D."/>
            <person name="Haas B."/>
            <person name="Hansen N.F."/>
            <person name="Hughes B."/>
            <person name="Huizar L."/>
            <person name="Hunter J.L."/>
            <person name="Jenkins J."/>
            <person name="Johnson-Hopson C."/>
            <person name="Khan S."/>
            <person name="Khaykin E."/>
            <person name="Kim C.J."/>
            <person name="Koo H.L."/>
            <person name="Kremenetskaia I."/>
            <person name="Kurtz D.B."/>
            <person name="Kwan A."/>
            <person name="Lam B."/>
            <person name="Langin-Hooper S."/>
            <person name="Lee A."/>
            <person name="Lee J.M."/>
            <person name="Lenz C.A."/>
            <person name="Li J.H."/>
            <person name="Li Y.-P."/>
            <person name="Lin X."/>
            <person name="Liu S.X."/>
            <person name="Liu Z.A."/>
            <person name="Luros J.S."/>
            <person name="Maiti R."/>
            <person name="Marziali A."/>
            <person name="Militscher J."/>
            <person name="Miranda M."/>
            <person name="Nguyen M."/>
            <person name="Nierman W.C."/>
            <person name="Osborne B.I."/>
            <person name="Pai G."/>
            <person name="Peterson J."/>
            <person name="Pham P.K."/>
            <person name="Rizzo M."/>
            <person name="Rooney T."/>
            <person name="Rowley D."/>
            <person name="Sakano H."/>
            <person name="Salzberg S.L."/>
            <person name="Schwartz J.R."/>
            <person name="Shinn P."/>
            <person name="Southwick A.M."/>
            <person name="Sun H."/>
            <person name="Tallon L.J."/>
            <person name="Tambunga G."/>
            <person name="Toriumi M.J."/>
            <person name="Town C.D."/>
            <person name="Utterback T."/>
            <person name="Van Aken S."/>
            <person name="Vaysberg M."/>
            <person name="Vysotskaia V.S."/>
            <person name="Walker M."/>
            <person name="Wu D."/>
            <person name="Yu G."/>
            <person name="Fraser C.M."/>
            <person name="Venter J.C."/>
            <person name="Davis R.W."/>
        </authorList>
    </citation>
    <scope>NUCLEOTIDE SEQUENCE [LARGE SCALE GENOMIC DNA]</scope>
    <source>
        <strain>cv. Columbia</strain>
    </source>
</reference>
<reference key="2">
    <citation type="journal article" date="2017" name="Plant J.">
        <title>Araport11: a complete reannotation of the Arabidopsis thaliana reference genome.</title>
        <authorList>
            <person name="Cheng C.Y."/>
            <person name="Krishnakumar V."/>
            <person name="Chan A.P."/>
            <person name="Thibaud-Nissen F."/>
            <person name="Schobel S."/>
            <person name="Town C.D."/>
        </authorList>
    </citation>
    <scope>GENOME REANNOTATION</scope>
    <source>
        <strain>cv. Columbia</strain>
    </source>
</reference>
<reference key="3">
    <citation type="journal article" date="2003" name="Plant Physiol.">
        <title>Arabidopsis contains a large superfamily of acyl-activating enzymes. Phylogenetic and biochemical analysis reveals a new class of acyl-coenzyme a synthetases.</title>
        <authorList>
            <person name="Shockey J.M."/>
            <person name="Fulda M.S."/>
            <person name="Browse J."/>
        </authorList>
    </citation>
    <scope>GENE FAMILY</scope>
</reference>
<reference key="4">
    <citation type="journal article" date="2007" name="Plant J.">
        <title>Characterization of seed-specific benzoyloxyglucosinolate mutations in Arabidopsis thaliana.</title>
        <authorList>
            <person name="Kliebenstein D.J."/>
            <person name="D'Auria J.C."/>
            <person name="Behere A.S."/>
            <person name="Kim J.H."/>
            <person name="Gunderson K.L."/>
            <person name="Breen J.N."/>
            <person name="Lee G."/>
            <person name="Gershenzon J."/>
            <person name="Last R.L."/>
            <person name="Jander G."/>
        </authorList>
    </citation>
    <scope>FUNCTION</scope>
    <scope>CATALYTIC ACTIVITY</scope>
    <source>
        <strain>cv. Columbia</strain>
    </source>
</reference>